<protein>
    <recommendedName>
        <fullName>Uncharacterized protein YpgQ</fullName>
    </recommendedName>
</protein>
<keyword id="KW-1185">Reference proteome</keyword>
<proteinExistence type="predicted"/>
<accession>P54168</accession>
<dbReference type="EMBL" id="L77246">
    <property type="protein sequence ID" value="AAA96627.1"/>
    <property type="molecule type" value="Genomic_DNA"/>
</dbReference>
<dbReference type="EMBL" id="AL009126">
    <property type="protein sequence ID" value="CAB14107.1"/>
    <property type="molecule type" value="Genomic_DNA"/>
</dbReference>
<dbReference type="PIR" id="E69935">
    <property type="entry name" value="E69935"/>
</dbReference>
<dbReference type="SMR" id="P54168"/>
<dbReference type="FunCoup" id="P54168">
    <property type="interactions" value="147"/>
</dbReference>
<dbReference type="STRING" id="224308.BSU21890"/>
<dbReference type="PaxDb" id="224308-BSU21890"/>
<dbReference type="EnsemblBacteria" id="CAB14107">
    <property type="protein sequence ID" value="CAB14107"/>
    <property type="gene ID" value="BSU_21890"/>
</dbReference>
<dbReference type="GeneID" id="939080"/>
<dbReference type="KEGG" id="bsu:BSU21890"/>
<dbReference type="PATRIC" id="fig|224308.179.peg.2391"/>
<dbReference type="eggNOG" id="COG1418">
    <property type="taxonomic scope" value="Bacteria"/>
</dbReference>
<dbReference type="InParanoid" id="P54168"/>
<dbReference type="OrthoDB" id="9797344at2"/>
<dbReference type="PhylomeDB" id="P54168"/>
<dbReference type="BioCyc" id="BSUB:BSU21890-MONOMER"/>
<dbReference type="Proteomes" id="UP000001570">
    <property type="component" value="Chromosome"/>
</dbReference>
<dbReference type="CDD" id="cd00077">
    <property type="entry name" value="HDc"/>
    <property type="match status" value="1"/>
</dbReference>
<dbReference type="Gene3D" id="1.20.58.1910">
    <property type="match status" value="1"/>
</dbReference>
<dbReference type="Gene3D" id="1.10.472.50">
    <property type="entry name" value="HD-domain/PDEase-like"/>
    <property type="match status" value="1"/>
</dbReference>
<dbReference type="InterPro" id="IPR003607">
    <property type="entry name" value="HD/PDEase_dom"/>
</dbReference>
<dbReference type="InterPro" id="IPR006674">
    <property type="entry name" value="HD_domain"/>
</dbReference>
<dbReference type="PANTHER" id="PTHR33594:SF1">
    <property type="entry name" value="HD_PDEASE DOMAIN-CONTAINING PROTEIN"/>
    <property type="match status" value="1"/>
</dbReference>
<dbReference type="PANTHER" id="PTHR33594">
    <property type="entry name" value="SUPERFAMILY HYDROLASE, PUTATIVE (AFU_ORTHOLOGUE AFUA_1G03035)-RELATED"/>
    <property type="match status" value="1"/>
</dbReference>
<dbReference type="Pfam" id="PF01966">
    <property type="entry name" value="HD"/>
    <property type="match status" value="1"/>
</dbReference>
<dbReference type="SMART" id="SM00471">
    <property type="entry name" value="HDc"/>
    <property type="match status" value="1"/>
</dbReference>
<dbReference type="SUPFAM" id="SSF109604">
    <property type="entry name" value="HD-domain/PDEase-like"/>
    <property type="match status" value="1"/>
</dbReference>
<dbReference type="PROSITE" id="PS51831">
    <property type="entry name" value="HD"/>
    <property type="match status" value="1"/>
</dbReference>
<evidence type="ECO:0000255" key="1">
    <source>
        <dbReference type="PROSITE-ProRule" id="PRU01175"/>
    </source>
</evidence>
<feature type="chain" id="PRO_0000049692" description="Uncharacterized protein YpgQ">
    <location>
        <begin position="1"/>
        <end position="205"/>
    </location>
</feature>
<feature type="domain" description="HD" evidence="1">
    <location>
        <begin position="26"/>
        <end position="129"/>
    </location>
</feature>
<organism>
    <name type="scientific">Bacillus subtilis (strain 168)</name>
    <dbReference type="NCBI Taxonomy" id="224308"/>
    <lineage>
        <taxon>Bacteria</taxon>
        <taxon>Bacillati</taxon>
        <taxon>Bacillota</taxon>
        <taxon>Bacilli</taxon>
        <taxon>Bacillales</taxon>
        <taxon>Bacillaceae</taxon>
        <taxon>Bacillus</taxon>
    </lineage>
</organism>
<name>YPGQ_BACSU</name>
<gene>
    <name type="primary">ypgQ</name>
    <name type="ordered locus">BSU21890</name>
</gene>
<sequence length="205" mass="23122">MKELKQAEQIRTWVQSILTDESSGHDWHHVSRVADLAAYIGEKEKADLFIVETAALVHDLIDVKLPDTVRLSVSEVYDQLVFFGVGKENADRVIHIITRMSFRDRGKLAKEPLSIEGKAVQDADRLDAIGAVGIARAFMFAGAKGHGLYGDEQSAYAHFFHKLLRLKDMMNTDTARELAEERHNFMLQFVRQLEKDIPGIDAETS</sequence>
<reference key="1">
    <citation type="journal article" date="1996" name="Microbiology">
        <title>Organization of the Bacillus subtilis 168 chromosome between kdg and the attachment site of the SP beta prophage: use of long accurate PCR and yeast artificial chromosomes for sequencing.</title>
        <authorList>
            <person name="Capuano V."/>
            <person name="Galleron N."/>
            <person name="Pujic P."/>
            <person name="Sorokin A."/>
            <person name="Ehrlich S.D."/>
        </authorList>
    </citation>
    <scope>NUCLEOTIDE SEQUENCE [GENOMIC DNA]</scope>
    <source>
        <strain>168 / Marburg / ATCC 6051 / DSM 10 / JCM 1465 / NBRC 13719 / NCIMB 3610 / NRRL NRS-744 / VKM B-501</strain>
    </source>
</reference>
<reference key="2">
    <citation type="journal article" date="1997" name="Nature">
        <title>The complete genome sequence of the Gram-positive bacterium Bacillus subtilis.</title>
        <authorList>
            <person name="Kunst F."/>
            <person name="Ogasawara N."/>
            <person name="Moszer I."/>
            <person name="Albertini A.M."/>
            <person name="Alloni G."/>
            <person name="Azevedo V."/>
            <person name="Bertero M.G."/>
            <person name="Bessieres P."/>
            <person name="Bolotin A."/>
            <person name="Borchert S."/>
            <person name="Borriss R."/>
            <person name="Boursier L."/>
            <person name="Brans A."/>
            <person name="Braun M."/>
            <person name="Brignell S.C."/>
            <person name="Bron S."/>
            <person name="Brouillet S."/>
            <person name="Bruschi C.V."/>
            <person name="Caldwell B."/>
            <person name="Capuano V."/>
            <person name="Carter N.M."/>
            <person name="Choi S.-K."/>
            <person name="Codani J.-J."/>
            <person name="Connerton I.F."/>
            <person name="Cummings N.J."/>
            <person name="Daniel R.A."/>
            <person name="Denizot F."/>
            <person name="Devine K.M."/>
            <person name="Duesterhoeft A."/>
            <person name="Ehrlich S.D."/>
            <person name="Emmerson P.T."/>
            <person name="Entian K.-D."/>
            <person name="Errington J."/>
            <person name="Fabret C."/>
            <person name="Ferrari E."/>
            <person name="Foulger D."/>
            <person name="Fritz C."/>
            <person name="Fujita M."/>
            <person name="Fujita Y."/>
            <person name="Fuma S."/>
            <person name="Galizzi A."/>
            <person name="Galleron N."/>
            <person name="Ghim S.-Y."/>
            <person name="Glaser P."/>
            <person name="Goffeau A."/>
            <person name="Golightly E.J."/>
            <person name="Grandi G."/>
            <person name="Guiseppi G."/>
            <person name="Guy B.J."/>
            <person name="Haga K."/>
            <person name="Haiech J."/>
            <person name="Harwood C.R."/>
            <person name="Henaut A."/>
            <person name="Hilbert H."/>
            <person name="Holsappel S."/>
            <person name="Hosono S."/>
            <person name="Hullo M.-F."/>
            <person name="Itaya M."/>
            <person name="Jones L.-M."/>
            <person name="Joris B."/>
            <person name="Karamata D."/>
            <person name="Kasahara Y."/>
            <person name="Klaerr-Blanchard M."/>
            <person name="Klein C."/>
            <person name="Kobayashi Y."/>
            <person name="Koetter P."/>
            <person name="Koningstein G."/>
            <person name="Krogh S."/>
            <person name="Kumano M."/>
            <person name="Kurita K."/>
            <person name="Lapidus A."/>
            <person name="Lardinois S."/>
            <person name="Lauber J."/>
            <person name="Lazarevic V."/>
            <person name="Lee S.-M."/>
            <person name="Levine A."/>
            <person name="Liu H."/>
            <person name="Masuda S."/>
            <person name="Mauel C."/>
            <person name="Medigue C."/>
            <person name="Medina N."/>
            <person name="Mellado R.P."/>
            <person name="Mizuno M."/>
            <person name="Moestl D."/>
            <person name="Nakai S."/>
            <person name="Noback M."/>
            <person name="Noone D."/>
            <person name="O'Reilly M."/>
            <person name="Ogawa K."/>
            <person name="Ogiwara A."/>
            <person name="Oudega B."/>
            <person name="Park S.-H."/>
            <person name="Parro V."/>
            <person name="Pohl T.M."/>
            <person name="Portetelle D."/>
            <person name="Porwollik S."/>
            <person name="Prescott A.M."/>
            <person name="Presecan E."/>
            <person name="Pujic P."/>
            <person name="Purnelle B."/>
            <person name="Rapoport G."/>
            <person name="Rey M."/>
            <person name="Reynolds S."/>
            <person name="Rieger M."/>
            <person name="Rivolta C."/>
            <person name="Rocha E."/>
            <person name="Roche B."/>
            <person name="Rose M."/>
            <person name="Sadaie Y."/>
            <person name="Sato T."/>
            <person name="Scanlan E."/>
            <person name="Schleich S."/>
            <person name="Schroeter R."/>
            <person name="Scoffone F."/>
            <person name="Sekiguchi J."/>
            <person name="Sekowska A."/>
            <person name="Seror S.J."/>
            <person name="Serror P."/>
            <person name="Shin B.-S."/>
            <person name="Soldo B."/>
            <person name="Sorokin A."/>
            <person name="Tacconi E."/>
            <person name="Takagi T."/>
            <person name="Takahashi H."/>
            <person name="Takemaru K."/>
            <person name="Takeuchi M."/>
            <person name="Tamakoshi A."/>
            <person name="Tanaka T."/>
            <person name="Terpstra P."/>
            <person name="Tognoni A."/>
            <person name="Tosato V."/>
            <person name="Uchiyama S."/>
            <person name="Vandenbol M."/>
            <person name="Vannier F."/>
            <person name="Vassarotti A."/>
            <person name="Viari A."/>
            <person name="Wambutt R."/>
            <person name="Wedler E."/>
            <person name="Wedler H."/>
            <person name="Weitzenegger T."/>
            <person name="Winters P."/>
            <person name="Wipat A."/>
            <person name="Yamamoto H."/>
            <person name="Yamane K."/>
            <person name="Yasumoto K."/>
            <person name="Yata K."/>
            <person name="Yoshida K."/>
            <person name="Yoshikawa H.-F."/>
            <person name="Zumstein E."/>
            <person name="Yoshikawa H."/>
            <person name="Danchin A."/>
        </authorList>
    </citation>
    <scope>NUCLEOTIDE SEQUENCE [LARGE SCALE GENOMIC DNA]</scope>
    <source>
        <strain>168</strain>
    </source>
</reference>